<keyword id="KW-0002">3D-structure</keyword>
<keyword id="KW-0249">Electron transport</keyword>
<keyword id="KW-0472">Membrane</keyword>
<keyword id="KW-0496">Mitochondrion</keyword>
<keyword id="KW-0999">Mitochondrion inner membrane</keyword>
<keyword id="KW-1185">Reference proteome</keyword>
<keyword id="KW-0679">Respiratory chain</keyword>
<keyword id="KW-0809">Transit peptide</keyword>
<keyword id="KW-0813">Transport</keyword>
<evidence type="ECO:0000250" key="1"/>
<evidence type="ECO:0000269" key="2">
    <source>
    </source>
</evidence>
<evidence type="ECO:0000305" key="3"/>
<evidence type="ECO:0000305" key="4">
    <source>
    </source>
</evidence>
<evidence type="ECO:0007829" key="5">
    <source>
        <dbReference type="PDB" id="8BED"/>
    </source>
</evidence>
<comment type="function">
    <text evidence="1">Accessory subunit of the mitochondrial membrane respiratory chain NADH dehydrogenase (Complex I), that is believed not to be involved in catalysis. Complex I functions in the transfer of electrons from NADH to the respiratory chain. The immediate electron acceptor for the enzyme is believed to be ubiquinone (By similarity).</text>
</comment>
<comment type="subunit">
    <text>Complex I is composed of at least 49 different subunits. This is a component of the iron-sulfur (IP) fragment of the enzyme.</text>
</comment>
<comment type="subcellular location">
    <subcellularLocation>
        <location evidence="1 4">Mitochondrion inner membrane</location>
        <topology evidence="1">Peripheral membrane protein</topology>
        <orientation evidence="1">Matrix side</orientation>
    </subcellularLocation>
</comment>
<comment type="similarity">
    <text evidence="3">Belongs to the complex I NDUFS6 subunit family.</text>
</comment>
<accession>Q9M9M6</accession>
<accession>Q41901</accession>
<feature type="transit peptide" description="Mitochondrion" evidence="2">
    <location>
        <begin position="1"/>
        <end position="22"/>
    </location>
</feature>
<feature type="chain" id="PRO_0000410794" description="NADH dehydrogenase [ubiquinone] iron-sulfur protein 6, mitochondrial">
    <location>
        <begin position="23"/>
        <end position="110"/>
    </location>
</feature>
<feature type="sequence conflict" description="In Ref. 3; CAA79002." evidence="3" ref="3">
    <original>K</original>
    <variation>R</variation>
    <location>
        <position position="64"/>
    </location>
</feature>
<feature type="sequence conflict" description="In Ref. 3; CAA79002." evidence="3" ref="3">
    <original>E</original>
    <variation>A</variation>
    <location>
        <position position="93"/>
    </location>
</feature>
<feature type="helix" evidence="5">
    <location>
        <begin position="39"/>
        <end position="42"/>
    </location>
</feature>
<feature type="helix" evidence="5">
    <location>
        <begin position="53"/>
        <end position="58"/>
    </location>
</feature>
<feature type="strand" evidence="5">
    <location>
        <begin position="63"/>
        <end position="72"/>
    </location>
</feature>
<feature type="strand" evidence="5">
    <location>
        <begin position="74"/>
        <end position="77"/>
    </location>
</feature>
<feature type="helix" evidence="5">
    <location>
        <begin position="78"/>
        <end position="80"/>
    </location>
</feature>
<feature type="strand" evidence="5">
    <location>
        <begin position="85"/>
        <end position="88"/>
    </location>
</feature>
<feature type="strand" evidence="5">
    <location>
        <begin position="91"/>
        <end position="93"/>
    </location>
</feature>
<feature type="turn" evidence="5">
    <location>
        <begin position="98"/>
        <end position="100"/>
    </location>
</feature>
<feature type="strand" evidence="5">
    <location>
        <begin position="103"/>
        <end position="107"/>
    </location>
</feature>
<reference key="1">
    <citation type="journal article" date="2000" name="Nature">
        <title>Sequence and analysis of chromosome 3 of the plant Arabidopsis thaliana.</title>
        <authorList>
            <person name="Salanoubat M."/>
            <person name="Lemcke K."/>
            <person name="Rieger M."/>
            <person name="Ansorge W."/>
            <person name="Unseld M."/>
            <person name="Fartmann B."/>
            <person name="Valle G."/>
            <person name="Bloecker H."/>
            <person name="Perez-Alonso M."/>
            <person name="Obermaier B."/>
            <person name="Delseny M."/>
            <person name="Boutry M."/>
            <person name="Grivell L.A."/>
            <person name="Mache R."/>
            <person name="Puigdomenech P."/>
            <person name="De Simone V."/>
            <person name="Choisne N."/>
            <person name="Artiguenave F."/>
            <person name="Robert C."/>
            <person name="Brottier P."/>
            <person name="Wincker P."/>
            <person name="Cattolico L."/>
            <person name="Weissenbach J."/>
            <person name="Saurin W."/>
            <person name="Quetier F."/>
            <person name="Schaefer M."/>
            <person name="Mueller-Auer S."/>
            <person name="Gabel C."/>
            <person name="Fuchs M."/>
            <person name="Benes V."/>
            <person name="Wurmbach E."/>
            <person name="Drzonek H."/>
            <person name="Erfle H."/>
            <person name="Jordan N."/>
            <person name="Bangert S."/>
            <person name="Wiedelmann R."/>
            <person name="Kranz H."/>
            <person name="Voss H."/>
            <person name="Holland R."/>
            <person name="Brandt P."/>
            <person name="Nyakatura G."/>
            <person name="Vezzi A."/>
            <person name="D'Angelo M."/>
            <person name="Pallavicini A."/>
            <person name="Toppo S."/>
            <person name="Simionati B."/>
            <person name="Conrad A."/>
            <person name="Hornischer K."/>
            <person name="Kauer G."/>
            <person name="Loehnert T.-H."/>
            <person name="Nordsiek G."/>
            <person name="Reichelt J."/>
            <person name="Scharfe M."/>
            <person name="Schoen O."/>
            <person name="Bargues M."/>
            <person name="Terol J."/>
            <person name="Climent J."/>
            <person name="Navarro P."/>
            <person name="Collado C."/>
            <person name="Perez-Perez A."/>
            <person name="Ottenwaelder B."/>
            <person name="Duchemin D."/>
            <person name="Cooke R."/>
            <person name="Laudie M."/>
            <person name="Berger-Llauro C."/>
            <person name="Purnelle B."/>
            <person name="Masuy D."/>
            <person name="de Haan M."/>
            <person name="Maarse A.C."/>
            <person name="Alcaraz J.-P."/>
            <person name="Cottet A."/>
            <person name="Casacuberta E."/>
            <person name="Monfort A."/>
            <person name="Argiriou A."/>
            <person name="Flores M."/>
            <person name="Liguori R."/>
            <person name="Vitale D."/>
            <person name="Mannhaupt G."/>
            <person name="Haase D."/>
            <person name="Schoof H."/>
            <person name="Rudd S."/>
            <person name="Zaccaria P."/>
            <person name="Mewes H.-W."/>
            <person name="Mayer K.F.X."/>
            <person name="Kaul S."/>
            <person name="Town C.D."/>
            <person name="Koo H.L."/>
            <person name="Tallon L.J."/>
            <person name="Jenkins J."/>
            <person name="Rooney T."/>
            <person name="Rizzo M."/>
            <person name="Walts A."/>
            <person name="Utterback T."/>
            <person name="Fujii C.Y."/>
            <person name="Shea T.P."/>
            <person name="Creasy T.H."/>
            <person name="Haas B."/>
            <person name="Maiti R."/>
            <person name="Wu D."/>
            <person name="Peterson J."/>
            <person name="Van Aken S."/>
            <person name="Pai G."/>
            <person name="Militscher J."/>
            <person name="Sellers P."/>
            <person name="Gill J.E."/>
            <person name="Feldblyum T.V."/>
            <person name="Preuss D."/>
            <person name="Lin X."/>
            <person name="Nierman W.C."/>
            <person name="Salzberg S.L."/>
            <person name="White O."/>
            <person name="Venter J.C."/>
            <person name="Fraser C.M."/>
            <person name="Kaneko T."/>
            <person name="Nakamura Y."/>
            <person name="Sato S."/>
            <person name="Kato T."/>
            <person name="Asamizu E."/>
            <person name="Sasamoto S."/>
            <person name="Kimura T."/>
            <person name="Idesawa K."/>
            <person name="Kawashima K."/>
            <person name="Kishida Y."/>
            <person name="Kiyokawa C."/>
            <person name="Kohara M."/>
            <person name="Matsumoto M."/>
            <person name="Matsuno A."/>
            <person name="Muraki A."/>
            <person name="Nakayama S."/>
            <person name="Nakazaki N."/>
            <person name="Shinpo S."/>
            <person name="Takeuchi C."/>
            <person name="Wada T."/>
            <person name="Watanabe A."/>
            <person name="Yamada M."/>
            <person name="Yasuda M."/>
            <person name="Tabata S."/>
        </authorList>
    </citation>
    <scope>NUCLEOTIDE SEQUENCE [LARGE SCALE GENOMIC DNA]</scope>
    <source>
        <strain>cv. Columbia</strain>
    </source>
</reference>
<reference key="2">
    <citation type="journal article" date="2017" name="Plant J.">
        <title>Araport11: a complete reannotation of the Arabidopsis thaliana reference genome.</title>
        <authorList>
            <person name="Cheng C.Y."/>
            <person name="Krishnakumar V."/>
            <person name="Chan A.P."/>
            <person name="Thibaud-Nissen F."/>
            <person name="Schobel S."/>
            <person name="Town C.D."/>
        </authorList>
    </citation>
    <scope>GENOME REANNOTATION</scope>
    <source>
        <strain>cv. Columbia</strain>
    </source>
</reference>
<reference key="3">
    <citation type="submission" date="1992-10" db="EMBL/GenBank/DDBJ databases">
        <title>The Arabidopsis thaliana transcribed genome: the GDR cDNA program.</title>
        <authorList>
            <person name="Raynal M."/>
            <person name="Grellet F."/>
            <person name="Laudie M."/>
            <person name="Meyer Y."/>
            <person name="Cooke R."/>
            <person name="Delseny M."/>
        </authorList>
    </citation>
    <scope>NUCLEOTIDE SEQUENCE [LARGE SCALE MRNA]</scope>
    <source>
        <strain>cv. Columbia</strain>
        <tissue>Green siliques</tissue>
    </source>
</reference>
<reference key="4">
    <citation type="journal article" date="2003" name="Science">
        <title>Empirical analysis of transcriptional activity in the Arabidopsis genome.</title>
        <authorList>
            <person name="Yamada K."/>
            <person name="Lim J."/>
            <person name="Dale J.M."/>
            <person name="Chen H."/>
            <person name="Shinn P."/>
            <person name="Palm C.J."/>
            <person name="Southwick A.M."/>
            <person name="Wu H.C."/>
            <person name="Kim C.J."/>
            <person name="Nguyen M."/>
            <person name="Pham P.K."/>
            <person name="Cheuk R.F."/>
            <person name="Karlin-Newmann G."/>
            <person name="Liu S.X."/>
            <person name="Lam B."/>
            <person name="Sakano H."/>
            <person name="Wu T."/>
            <person name="Yu G."/>
            <person name="Miranda M."/>
            <person name="Quach H.L."/>
            <person name="Tripp M."/>
            <person name="Chang C.H."/>
            <person name="Lee J.M."/>
            <person name="Toriumi M.J."/>
            <person name="Chan M.M."/>
            <person name="Tang C.C."/>
            <person name="Onodera C.S."/>
            <person name="Deng J.M."/>
            <person name="Akiyama K."/>
            <person name="Ansari Y."/>
            <person name="Arakawa T."/>
            <person name="Banh J."/>
            <person name="Banno F."/>
            <person name="Bowser L."/>
            <person name="Brooks S.Y."/>
            <person name="Carninci P."/>
            <person name="Chao Q."/>
            <person name="Choy N."/>
            <person name="Enju A."/>
            <person name="Goldsmith A.D."/>
            <person name="Gurjal M."/>
            <person name="Hansen N.F."/>
            <person name="Hayashizaki Y."/>
            <person name="Johnson-Hopson C."/>
            <person name="Hsuan V.W."/>
            <person name="Iida K."/>
            <person name="Karnes M."/>
            <person name="Khan S."/>
            <person name="Koesema E."/>
            <person name="Ishida J."/>
            <person name="Jiang P.X."/>
            <person name="Jones T."/>
            <person name="Kawai J."/>
            <person name="Kamiya A."/>
            <person name="Meyers C."/>
            <person name="Nakajima M."/>
            <person name="Narusaka M."/>
            <person name="Seki M."/>
            <person name="Sakurai T."/>
            <person name="Satou M."/>
            <person name="Tamse R."/>
            <person name="Vaysberg M."/>
            <person name="Wallender E.K."/>
            <person name="Wong C."/>
            <person name="Yamamura Y."/>
            <person name="Yuan S."/>
            <person name="Shinozaki K."/>
            <person name="Davis R.W."/>
            <person name="Theologis A."/>
            <person name="Ecker J.R."/>
        </authorList>
    </citation>
    <scope>NUCLEOTIDE SEQUENCE [LARGE SCALE MRNA]</scope>
    <source>
        <strain>cv. Columbia</strain>
    </source>
</reference>
<reference key="5">
    <citation type="submission" date="2006-07" db="EMBL/GenBank/DDBJ databases">
        <title>Large-scale analysis of RIKEN Arabidopsis full-length (RAFL) cDNAs.</title>
        <authorList>
            <person name="Totoki Y."/>
            <person name="Seki M."/>
            <person name="Ishida J."/>
            <person name="Nakajima M."/>
            <person name="Enju A."/>
            <person name="Kamiya A."/>
            <person name="Narusaka M."/>
            <person name="Shin-i T."/>
            <person name="Nakagawa M."/>
            <person name="Sakamoto N."/>
            <person name="Oishi K."/>
            <person name="Kohara Y."/>
            <person name="Kobayashi M."/>
            <person name="Toyoda A."/>
            <person name="Sakaki Y."/>
            <person name="Sakurai T."/>
            <person name="Iida K."/>
            <person name="Akiyama K."/>
            <person name="Satou M."/>
            <person name="Toyoda T."/>
            <person name="Konagaya A."/>
            <person name="Carninci P."/>
            <person name="Kawai J."/>
            <person name="Hayashizaki Y."/>
            <person name="Shinozaki K."/>
        </authorList>
    </citation>
    <scope>NUCLEOTIDE SEQUENCE [LARGE SCALE MRNA]</scope>
    <source>
        <strain>cv. Columbia</strain>
    </source>
</reference>
<reference key="6">
    <citation type="submission" date="2002-03" db="EMBL/GenBank/DDBJ databases">
        <title>Full-length cDNA from Arabidopsis thaliana.</title>
        <authorList>
            <person name="Brover V.V."/>
            <person name="Troukhan M.E."/>
            <person name="Alexandrov N.A."/>
            <person name="Lu Y.-P."/>
            <person name="Flavell R.B."/>
            <person name="Feldmann K.A."/>
        </authorList>
    </citation>
    <scope>NUCLEOTIDE SEQUENCE [LARGE SCALE MRNA]</scope>
</reference>
<reference key="7">
    <citation type="journal article" date="2015" name="J. Exp. Bot.">
        <title>Identification of cleavage sites and substrate proteins for two mitochondrial intermediate peptidases in Arabidopsis thaliana.</title>
        <authorList>
            <person name="Carrie C."/>
            <person name="Venne A.S."/>
            <person name="Zahedi R.P."/>
            <person name="Soll J."/>
        </authorList>
    </citation>
    <scope>IDENTIFICATION BY MASS SPECTROMETRY</scope>
    <scope>CLEAVAGE OF TRANSIT PEPTIDE AFTER PHE-22</scope>
</reference>
<dbReference type="EMBL" id="AC012328">
    <property type="protein sequence ID" value="AAF26117.1"/>
    <property type="molecule type" value="Genomic_DNA"/>
</dbReference>
<dbReference type="EMBL" id="CP002686">
    <property type="protein sequence ID" value="AEE73898.1"/>
    <property type="molecule type" value="Genomic_DNA"/>
</dbReference>
<dbReference type="EMBL" id="Z17587">
    <property type="protein sequence ID" value="CAA79002.1"/>
    <property type="molecule type" value="mRNA"/>
</dbReference>
<dbReference type="EMBL" id="AF325039">
    <property type="protein sequence ID" value="AAG40391.1"/>
    <property type="molecule type" value="mRNA"/>
</dbReference>
<dbReference type="EMBL" id="BT004574">
    <property type="protein sequence ID" value="AAO42820.1"/>
    <property type="molecule type" value="mRNA"/>
</dbReference>
<dbReference type="EMBL" id="AK227975">
    <property type="protein sequence ID" value="BAE99941.1"/>
    <property type="molecule type" value="mRNA"/>
</dbReference>
<dbReference type="EMBL" id="AY087471">
    <property type="protein sequence ID" value="AAM65015.1"/>
    <property type="molecule type" value="mRNA"/>
</dbReference>
<dbReference type="RefSeq" id="NP_566191.1">
    <property type="nucleotide sequence ID" value="NM_111177.4"/>
</dbReference>
<dbReference type="PDB" id="7A23">
    <property type="method" value="EM"/>
    <property type="resolution" value="3.70 A"/>
    <property type="chains" value="P=1-110"/>
</dbReference>
<dbReference type="PDB" id="7A24">
    <property type="method" value="EM"/>
    <property type="resolution" value="3.80 A"/>
    <property type="chains" value="P=1-110"/>
</dbReference>
<dbReference type="PDB" id="7AQR">
    <property type="method" value="EM"/>
    <property type="resolution" value="2.91 A"/>
    <property type="chains" value="R=1-110"/>
</dbReference>
<dbReference type="PDB" id="7AR7">
    <property type="method" value="EM"/>
    <property type="resolution" value="3.72 A"/>
    <property type="chains" value="R=48-109"/>
</dbReference>
<dbReference type="PDB" id="7AR8">
    <property type="method" value="EM"/>
    <property type="resolution" value="3.53 A"/>
    <property type="chains" value="R=1-110"/>
</dbReference>
<dbReference type="PDB" id="7ARB">
    <property type="method" value="EM"/>
    <property type="resolution" value="3.41 A"/>
    <property type="chains" value="R=1-110"/>
</dbReference>
<dbReference type="PDB" id="8BED">
    <property type="method" value="EM"/>
    <property type="resolution" value="2.03 A"/>
    <property type="chains" value="R=1-110"/>
</dbReference>
<dbReference type="PDB" id="8BPX">
    <property type="method" value="EM"/>
    <property type="resolution" value="2.09 A"/>
    <property type="chains" value="R=1-110"/>
</dbReference>
<dbReference type="PDB" id="8BQ5">
    <property type="method" value="EM"/>
    <property type="resolution" value="2.73 A"/>
    <property type="chains" value="R=1-110"/>
</dbReference>
<dbReference type="PDB" id="8BQ6">
    <property type="method" value="EM"/>
    <property type="resolution" value="2.80 A"/>
    <property type="chains" value="R=1-110"/>
</dbReference>
<dbReference type="PDBsum" id="7A23"/>
<dbReference type="PDBsum" id="7A24"/>
<dbReference type="PDBsum" id="7AQR"/>
<dbReference type="PDBsum" id="7AR7"/>
<dbReference type="PDBsum" id="7AR8"/>
<dbReference type="PDBsum" id="7ARB"/>
<dbReference type="PDBsum" id="8BED"/>
<dbReference type="PDBsum" id="8BPX"/>
<dbReference type="PDBsum" id="8BQ5"/>
<dbReference type="PDBsum" id="8BQ6"/>
<dbReference type="EMDB" id="EMD-11873"/>
<dbReference type="EMDB" id="EMD-11875"/>
<dbReference type="EMDB" id="EMD-11876"/>
<dbReference type="EMDB" id="EMD-11878"/>
<dbReference type="EMDB" id="EMD-15998"/>
<dbReference type="EMDB" id="EMD-16168"/>
<dbReference type="EMDB" id="EMD-16171"/>
<dbReference type="EMDB" id="EMD-16172"/>
<dbReference type="SMR" id="Q9M9M6"/>
<dbReference type="BioGRID" id="6466">
    <property type="interactions" value="1"/>
</dbReference>
<dbReference type="FunCoup" id="Q9M9M6">
    <property type="interactions" value="260"/>
</dbReference>
<dbReference type="STRING" id="3702.Q9M9M6"/>
<dbReference type="TCDB" id="3.D.1.6.3">
    <property type="family name" value="the h+ or na+-translocating nadh dehydrogenase (ndh) family"/>
</dbReference>
<dbReference type="PaxDb" id="3702-AT3G03070.1"/>
<dbReference type="ProteomicsDB" id="238791"/>
<dbReference type="EnsemblPlants" id="AT3G03070.1">
    <property type="protein sequence ID" value="AT3G03070.1"/>
    <property type="gene ID" value="AT3G03070"/>
</dbReference>
<dbReference type="GeneID" id="821133"/>
<dbReference type="Gramene" id="AT3G03070.1">
    <property type="protein sequence ID" value="AT3G03070.1"/>
    <property type="gene ID" value="AT3G03070"/>
</dbReference>
<dbReference type="KEGG" id="ath:AT3G03070"/>
<dbReference type="Araport" id="AT3G03070"/>
<dbReference type="TAIR" id="AT3G03070"/>
<dbReference type="eggNOG" id="KOG3456">
    <property type="taxonomic scope" value="Eukaryota"/>
</dbReference>
<dbReference type="HOGENOM" id="CLU_083053_2_1_1"/>
<dbReference type="InParanoid" id="Q9M9M6"/>
<dbReference type="OMA" id="LDEPAIC"/>
<dbReference type="OrthoDB" id="307899at2759"/>
<dbReference type="PhylomeDB" id="Q9M9M6"/>
<dbReference type="PRO" id="PR:Q9M9M6"/>
<dbReference type="Proteomes" id="UP000006548">
    <property type="component" value="Chromosome 3"/>
</dbReference>
<dbReference type="ExpressionAtlas" id="Q9M9M6">
    <property type="expression patterns" value="baseline and differential"/>
</dbReference>
<dbReference type="GO" id="GO:0005743">
    <property type="term" value="C:mitochondrial inner membrane"/>
    <property type="evidence" value="ECO:0007669"/>
    <property type="project" value="UniProtKB-SubCell"/>
</dbReference>
<dbReference type="GO" id="GO:0005739">
    <property type="term" value="C:mitochondrion"/>
    <property type="evidence" value="ECO:0007005"/>
    <property type="project" value="TAIR"/>
</dbReference>
<dbReference type="GO" id="GO:0006120">
    <property type="term" value="P:mitochondrial electron transport, NADH to ubiquinone"/>
    <property type="evidence" value="ECO:0007669"/>
    <property type="project" value="InterPro"/>
</dbReference>
<dbReference type="FunFam" id="2.60.260.40:FF:000001">
    <property type="entry name" value="NADH dehydrogenase [ubiquinone] iron-sulfur protein 6, mitochondrial"/>
    <property type="match status" value="1"/>
</dbReference>
<dbReference type="Gene3D" id="2.60.260.40">
    <property type="entry name" value="q5lls5 like domains"/>
    <property type="match status" value="1"/>
</dbReference>
<dbReference type="InterPro" id="IPR016668">
    <property type="entry name" value="NDUFS6"/>
</dbReference>
<dbReference type="InterPro" id="IPR019401">
    <property type="entry name" value="Znf_CHCC"/>
</dbReference>
<dbReference type="PANTHER" id="PTHR13156:SF0">
    <property type="entry name" value="NADH DEHYDROGENASE [UBIQUINONE] IRON-SULFUR PROTEIN 6, MITOCHONDRIAL"/>
    <property type="match status" value="1"/>
</dbReference>
<dbReference type="PANTHER" id="PTHR13156">
    <property type="entry name" value="NADH-UBIQUINONE OXIDOREDUCTASE 13 KD-A SUBUNIT"/>
    <property type="match status" value="1"/>
</dbReference>
<dbReference type="Pfam" id="PF10276">
    <property type="entry name" value="zf-CHCC"/>
    <property type="match status" value="1"/>
</dbReference>
<dbReference type="PIRSF" id="PIRSF016564">
    <property type="entry name" value="CI-13KD-A"/>
    <property type="match status" value="1"/>
</dbReference>
<protein>
    <recommendedName>
        <fullName>NADH dehydrogenase [ubiquinone] iron-sulfur protein 6, mitochondrial</fullName>
    </recommendedName>
</protein>
<proteinExistence type="evidence at protein level"/>
<sequence>MASNLLKALIRSQILPSSRRNFSVATTQLGIPTDDLVGNHTAKWMQDRSKKSPMELISEVPPIKVDGRIVACEGDTNPALGHPIEFICLDLNEPAICKYCGLRYVQDHHH</sequence>
<organism>
    <name type="scientific">Arabidopsis thaliana</name>
    <name type="common">Mouse-ear cress</name>
    <dbReference type="NCBI Taxonomy" id="3702"/>
    <lineage>
        <taxon>Eukaryota</taxon>
        <taxon>Viridiplantae</taxon>
        <taxon>Streptophyta</taxon>
        <taxon>Embryophyta</taxon>
        <taxon>Tracheophyta</taxon>
        <taxon>Spermatophyta</taxon>
        <taxon>Magnoliopsida</taxon>
        <taxon>eudicotyledons</taxon>
        <taxon>Gunneridae</taxon>
        <taxon>Pentapetalae</taxon>
        <taxon>rosids</taxon>
        <taxon>malvids</taxon>
        <taxon>Brassicales</taxon>
        <taxon>Brassicaceae</taxon>
        <taxon>Camelineae</taxon>
        <taxon>Arabidopsis</taxon>
    </lineage>
</organism>
<gene>
    <name type="ordered locus">At3g03070</name>
    <name type="ORF">T17B22_24</name>
</gene>
<name>NDUS6_ARATH</name>